<accession>Q2FG97</accession>
<comment type="function">
    <text evidence="1">Catalyzes the attachment of L-aspartate to tRNA(Asp) in a two-step reaction: L-aspartate is first activated by ATP to form Asp-AMP and then transferred to the acceptor end of tRNA(Asp).</text>
</comment>
<comment type="catalytic activity">
    <reaction evidence="1">
        <text>tRNA(Asp) + L-aspartate + ATP = L-aspartyl-tRNA(Asp) + AMP + diphosphate</text>
        <dbReference type="Rhea" id="RHEA:19649"/>
        <dbReference type="Rhea" id="RHEA-COMP:9660"/>
        <dbReference type="Rhea" id="RHEA-COMP:9678"/>
        <dbReference type="ChEBI" id="CHEBI:29991"/>
        <dbReference type="ChEBI" id="CHEBI:30616"/>
        <dbReference type="ChEBI" id="CHEBI:33019"/>
        <dbReference type="ChEBI" id="CHEBI:78442"/>
        <dbReference type="ChEBI" id="CHEBI:78516"/>
        <dbReference type="ChEBI" id="CHEBI:456215"/>
        <dbReference type="EC" id="6.1.1.12"/>
    </reaction>
</comment>
<comment type="subunit">
    <text evidence="1">Homodimer.</text>
</comment>
<comment type="subcellular location">
    <subcellularLocation>
        <location evidence="1">Cytoplasm</location>
    </subcellularLocation>
</comment>
<comment type="similarity">
    <text evidence="1">Belongs to the class-II aminoacyl-tRNA synthetase family. Type 1 subfamily.</text>
</comment>
<protein>
    <recommendedName>
        <fullName evidence="1">Aspartate--tRNA ligase</fullName>
        <ecNumber evidence="1">6.1.1.12</ecNumber>
    </recommendedName>
    <alternativeName>
        <fullName evidence="1">Aspartyl-tRNA synthetase</fullName>
        <shortName evidence="1">AspRS</shortName>
    </alternativeName>
</protein>
<name>SYD_STAA3</name>
<evidence type="ECO:0000255" key="1">
    <source>
        <dbReference type="HAMAP-Rule" id="MF_00044"/>
    </source>
</evidence>
<gene>
    <name evidence="1" type="primary">aspS</name>
    <name type="ordered locus">SAUSA300_1586</name>
</gene>
<proteinExistence type="inferred from homology"/>
<feature type="chain" id="PRO_0000235561" description="Aspartate--tRNA ligase">
    <location>
        <begin position="1"/>
        <end position="588"/>
    </location>
</feature>
<feature type="region of interest" description="Aspartate" evidence="1">
    <location>
        <begin position="201"/>
        <end position="204"/>
    </location>
</feature>
<feature type="binding site" evidence="1">
    <location>
        <position position="177"/>
    </location>
    <ligand>
        <name>L-aspartate</name>
        <dbReference type="ChEBI" id="CHEBI:29991"/>
    </ligand>
</feature>
<feature type="binding site" evidence="1">
    <location>
        <begin position="223"/>
        <end position="225"/>
    </location>
    <ligand>
        <name>ATP</name>
        <dbReference type="ChEBI" id="CHEBI:30616"/>
    </ligand>
</feature>
<feature type="binding site" evidence="1">
    <location>
        <position position="223"/>
    </location>
    <ligand>
        <name>L-aspartate</name>
        <dbReference type="ChEBI" id="CHEBI:29991"/>
    </ligand>
</feature>
<feature type="binding site" evidence="1">
    <location>
        <position position="232"/>
    </location>
    <ligand>
        <name>ATP</name>
        <dbReference type="ChEBI" id="CHEBI:30616"/>
    </ligand>
</feature>
<feature type="binding site" evidence="1">
    <location>
        <position position="451"/>
    </location>
    <ligand>
        <name>L-aspartate</name>
        <dbReference type="ChEBI" id="CHEBI:29991"/>
    </ligand>
</feature>
<feature type="binding site" evidence="1">
    <location>
        <position position="485"/>
    </location>
    <ligand>
        <name>ATP</name>
        <dbReference type="ChEBI" id="CHEBI:30616"/>
    </ligand>
</feature>
<feature type="binding site" evidence="1">
    <location>
        <position position="492"/>
    </location>
    <ligand>
        <name>L-aspartate</name>
        <dbReference type="ChEBI" id="CHEBI:29991"/>
    </ligand>
</feature>
<feature type="binding site" evidence="1">
    <location>
        <begin position="537"/>
        <end position="540"/>
    </location>
    <ligand>
        <name>ATP</name>
        <dbReference type="ChEBI" id="CHEBI:30616"/>
    </ligand>
</feature>
<dbReference type="EC" id="6.1.1.12" evidence="1"/>
<dbReference type="EMBL" id="CP000255">
    <property type="protein sequence ID" value="ABD21223.1"/>
    <property type="molecule type" value="Genomic_DNA"/>
</dbReference>
<dbReference type="RefSeq" id="WP_000044799.1">
    <property type="nucleotide sequence ID" value="NZ_CP027476.1"/>
</dbReference>
<dbReference type="SMR" id="Q2FG97"/>
<dbReference type="KEGG" id="saa:SAUSA300_1586"/>
<dbReference type="HOGENOM" id="CLU_014330_3_2_9"/>
<dbReference type="OMA" id="LCGWVDR"/>
<dbReference type="Proteomes" id="UP000001939">
    <property type="component" value="Chromosome"/>
</dbReference>
<dbReference type="GO" id="GO:0005737">
    <property type="term" value="C:cytoplasm"/>
    <property type="evidence" value="ECO:0007669"/>
    <property type="project" value="UniProtKB-SubCell"/>
</dbReference>
<dbReference type="GO" id="GO:0004815">
    <property type="term" value="F:aspartate-tRNA ligase activity"/>
    <property type="evidence" value="ECO:0007669"/>
    <property type="project" value="UniProtKB-UniRule"/>
</dbReference>
<dbReference type="GO" id="GO:0005524">
    <property type="term" value="F:ATP binding"/>
    <property type="evidence" value="ECO:0007669"/>
    <property type="project" value="UniProtKB-UniRule"/>
</dbReference>
<dbReference type="GO" id="GO:0140096">
    <property type="term" value="F:catalytic activity, acting on a protein"/>
    <property type="evidence" value="ECO:0007669"/>
    <property type="project" value="UniProtKB-ARBA"/>
</dbReference>
<dbReference type="GO" id="GO:0003676">
    <property type="term" value="F:nucleic acid binding"/>
    <property type="evidence" value="ECO:0007669"/>
    <property type="project" value="InterPro"/>
</dbReference>
<dbReference type="GO" id="GO:0016740">
    <property type="term" value="F:transferase activity"/>
    <property type="evidence" value="ECO:0007669"/>
    <property type="project" value="UniProtKB-ARBA"/>
</dbReference>
<dbReference type="GO" id="GO:0006422">
    <property type="term" value="P:aspartyl-tRNA aminoacylation"/>
    <property type="evidence" value="ECO:0007669"/>
    <property type="project" value="UniProtKB-UniRule"/>
</dbReference>
<dbReference type="CDD" id="cd00777">
    <property type="entry name" value="AspRS_core"/>
    <property type="match status" value="1"/>
</dbReference>
<dbReference type="CDD" id="cd04317">
    <property type="entry name" value="EcAspRS_like_N"/>
    <property type="match status" value="1"/>
</dbReference>
<dbReference type="Gene3D" id="3.30.930.10">
    <property type="entry name" value="Bira Bifunctional Protein, Domain 2"/>
    <property type="match status" value="1"/>
</dbReference>
<dbReference type="Gene3D" id="3.30.1360.30">
    <property type="entry name" value="GAD-like domain"/>
    <property type="match status" value="1"/>
</dbReference>
<dbReference type="Gene3D" id="2.40.50.140">
    <property type="entry name" value="Nucleic acid-binding proteins"/>
    <property type="match status" value="1"/>
</dbReference>
<dbReference type="HAMAP" id="MF_00044">
    <property type="entry name" value="Asp_tRNA_synth_type1"/>
    <property type="match status" value="1"/>
</dbReference>
<dbReference type="InterPro" id="IPR004364">
    <property type="entry name" value="Aa-tRNA-synt_II"/>
</dbReference>
<dbReference type="InterPro" id="IPR006195">
    <property type="entry name" value="aa-tRNA-synth_II"/>
</dbReference>
<dbReference type="InterPro" id="IPR045864">
    <property type="entry name" value="aa-tRNA-synth_II/BPL/LPL"/>
</dbReference>
<dbReference type="InterPro" id="IPR004524">
    <property type="entry name" value="Asp-tRNA-ligase_1"/>
</dbReference>
<dbReference type="InterPro" id="IPR047089">
    <property type="entry name" value="Asp-tRNA-ligase_1_N"/>
</dbReference>
<dbReference type="InterPro" id="IPR002312">
    <property type="entry name" value="Asp/Asn-tRNA-synth_IIb"/>
</dbReference>
<dbReference type="InterPro" id="IPR047090">
    <property type="entry name" value="AspRS_core"/>
</dbReference>
<dbReference type="InterPro" id="IPR004115">
    <property type="entry name" value="GAD-like_sf"/>
</dbReference>
<dbReference type="InterPro" id="IPR029351">
    <property type="entry name" value="GAD_dom"/>
</dbReference>
<dbReference type="InterPro" id="IPR012340">
    <property type="entry name" value="NA-bd_OB-fold"/>
</dbReference>
<dbReference type="InterPro" id="IPR004365">
    <property type="entry name" value="NA-bd_OB_tRNA"/>
</dbReference>
<dbReference type="NCBIfam" id="TIGR00459">
    <property type="entry name" value="aspS_bact"/>
    <property type="match status" value="1"/>
</dbReference>
<dbReference type="NCBIfam" id="NF001750">
    <property type="entry name" value="PRK00476.1"/>
    <property type="match status" value="1"/>
</dbReference>
<dbReference type="PANTHER" id="PTHR22594:SF5">
    <property type="entry name" value="ASPARTATE--TRNA LIGASE, MITOCHONDRIAL"/>
    <property type="match status" value="1"/>
</dbReference>
<dbReference type="PANTHER" id="PTHR22594">
    <property type="entry name" value="ASPARTYL/LYSYL-TRNA SYNTHETASE"/>
    <property type="match status" value="1"/>
</dbReference>
<dbReference type="Pfam" id="PF02938">
    <property type="entry name" value="GAD"/>
    <property type="match status" value="1"/>
</dbReference>
<dbReference type="Pfam" id="PF00152">
    <property type="entry name" value="tRNA-synt_2"/>
    <property type="match status" value="1"/>
</dbReference>
<dbReference type="Pfam" id="PF01336">
    <property type="entry name" value="tRNA_anti-codon"/>
    <property type="match status" value="1"/>
</dbReference>
<dbReference type="PRINTS" id="PR01042">
    <property type="entry name" value="TRNASYNTHASP"/>
</dbReference>
<dbReference type="SUPFAM" id="SSF55681">
    <property type="entry name" value="Class II aaRS and biotin synthetases"/>
    <property type="match status" value="1"/>
</dbReference>
<dbReference type="SUPFAM" id="SSF55261">
    <property type="entry name" value="GAD domain-like"/>
    <property type="match status" value="1"/>
</dbReference>
<dbReference type="SUPFAM" id="SSF50249">
    <property type="entry name" value="Nucleic acid-binding proteins"/>
    <property type="match status" value="1"/>
</dbReference>
<dbReference type="PROSITE" id="PS50862">
    <property type="entry name" value="AA_TRNA_LIGASE_II"/>
    <property type="match status" value="1"/>
</dbReference>
<keyword id="KW-0030">Aminoacyl-tRNA synthetase</keyword>
<keyword id="KW-0067">ATP-binding</keyword>
<keyword id="KW-0963">Cytoplasm</keyword>
<keyword id="KW-0436">Ligase</keyword>
<keyword id="KW-0547">Nucleotide-binding</keyword>
<keyword id="KW-0648">Protein biosynthesis</keyword>
<sequence>MSKRTTYCGLVTEAFLGQEITLKGWVNNRRDLGGLIFVDLRDREGIVQVVFNPAFSEEALKIAETVRSEYVVEVQGTVTKRDPETVNPKIKTGQVEVQVTNIKVINKSETPPFSINEENVNVDENIRLKYRYLDLRRQELAQTFKMRHQITRSIRQYLDDEGFFDIETPVLTKSTPEGARDYLVPSRVHDGEFYALPQSPQLFKQLLMISGFDKYYQIVKCFRDEDLRADRQPEFTQVDIEMSFVDQEDVMQMGEEMLKKVVKEVKGVEINGAFPRMTYKEAMRRYGSDKPDTRFEMELIDVSQLGRDMDFKVFKDTVENDGEIKAIVAKGAAEQYTRKDMDALTEFVNIYGAKGLAWVKVVEDGLTGPIGRFFETENVETLLTLTGAEAGDLVMFVADKPNVVAQSLGALRVKLAKELGLIDETKLNFLWVTDWPLLEYDEDAKRYVAAHHPFTSPKEADIAKLGTAPEEAEANAYDIVLNGYELGGGSIRIHDGELQEKMFEVLGFTKEQAQEQFGFLLDAFKYGAPPHGGIALGLDRLVMLLTNRTNLRDTIAFPKTASATCLLTNAPGEVSDKQLEELSLRIRH</sequence>
<organism>
    <name type="scientific">Staphylococcus aureus (strain USA300)</name>
    <dbReference type="NCBI Taxonomy" id="367830"/>
    <lineage>
        <taxon>Bacteria</taxon>
        <taxon>Bacillati</taxon>
        <taxon>Bacillota</taxon>
        <taxon>Bacilli</taxon>
        <taxon>Bacillales</taxon>
        <taxon>Staphylococcaceae</taxon>
        <taxon>Staphylococcus</taxon>
    </lineage>
</organism>
<reference key="1">
    <citation type="journal article" date="2006" name="Lancet">
        <title>Complete genome sequence of USA300, an epidemic clone of community-acquired meticillin-resistant Staphylococcus aureus.</title>
        <authorList>
            <person name="Diep B.A."/>
            <person name="Gill S.R."/>
            <person name="Chang R.F."/>
            <person name="Phan T.H."/>
            <person name="Chen J.H."/>
            <person name="Davidson M.G."/>
            <person name="Lin F."/>
            <person name="Lin J."/>
            <person name="Carleton H.A."/>
            <person name="Mongodin E.F."/>
            <person name="Sensabaugh G.F."/>
            <person name="Perdreau-Remington F."/>
        </authorList>
    </citation>
    <scope>NUCLEOTIDE SEQUENCE [LARGE SCALE GENOMIC DNA]</scope>
    <source>
        <strain>USA300</strain>
    </source>
</reference>